<accession>P53017</accession>
<protein>
    <recommendedName>
        <fullName>Major sperm protein 19/31/40/45/50/51/53/59/61/65/81/113/142</fullName>
        <shortName>MSP</shortName>
    </recommendedName>
</protein>
<keyword id="KW-0002">3D-structure</keyword>
<keyword id="KW-0007">Acetylation</keyword>
<keyword id="KW-0966">Cell projection</keyword>
<keyword id="KW-0963">Cytoplasm</keyword>
<keyword id="KW-0206">Cytoskeleton</keyword>
<keyword id="KW-1185">Reference proteome</keyword>
<feature type="initiator methionine" description="Removed" evidence="1">
    <location>
        <position position="1"/>
    </location>
</feature>
<feature type="chain" id="PRO_0000213437" description="Major sperm protein 19/31/40/45/50/51/53/59/61/65/81/113/142">
    <location>
        <begin position="2"/>
        <end position="127"/>
    </location>
</feature>
<feature type="domain" description="MSP" evidence="2">
    <location>
        <begin position="9"/>
        <end position="126"/>
    </location>
</feature>
<feature type="modified residue" description="N-acetylalanine" evidence="1">
    <location>
        <position position="2"/>
    </location>
</feature>
<feature type="strand" evidence="4">
    <location>
        <begin position="10"/>
        <end position="16"/>
    </location>
</feature>
<feature type="strand" evidence="4">
    <location>
        <begin position="18"/>
        <end position="22"/>
    </location>
</feature>
<feature type="strand" evidence="4">
    <location>
        <begin position="28"/>
        <end position="36"/>
    </location>
</feature>
<feature type="strand" evidence="4">
    <location>
        <begin position="38"/>
        <end position="40"/>
    </location>
</feature>
<feature type="strand" evidence="4">
    <location>
        <begin position="42"/>
        <end position="49"/>
    </location>
</feature>
<feature type="turn" evidence="4">
    <location>
        <begin position="51"/>
        <end position="53"/>
    </location>
</feature>
<feature type="strand" evidence="4">
    <location>
        <begin position="54"/>
        <end position="63"/>
    </location>
</feature>
<feature type="strand" evidence="4">
    <location>
        <begin position="68"/>
        <end position="75"/>
    </location>
</feature>
<feature type="helix" evidence="4">
    <location>
        <begin position="80"/>
        <end position="82"/>
    </location>
</feature>
<feature type="strand" evidence="4">
    <location>
        <begin position="89"/>
        <end position="96"/>
    </location>
</feature>
<feature type="helix" evidence="4">
    <location>
        <begin position="107"/>
        <end position="110"/>
    </location>
</feature>
<feature type="strand" evidence="4">
    <location>
        <begin position="112"/>
        <end position="114"/>
    </location>
</feature>
<feature type="strand" evidence="4">
    <location>
        <begin position="117"/>
        <end position="126"/>
    </location>
</feature>
<name>MSP19_CAEEL</name>
<organism>
    <name type="scientific">Caenorhabditis elegans</name>
    <dbReference type="NCBI Taxonomy" id="6239"/>
    <lineage>
        <taxon>Eukaryota</taxon>
        <taxon>Metazoa</taxon>
        <taxon>Ecdysozoa</taxon>
        <taxon>Nematoda</taxon>
        <taxon>Chromadorea</taxon>
        <taxon>Rhabditida</taxon>
        <taxon>Rhabditina</taxon>
        <taxon>Rhabditomorpha</taxon>
        <taxon>Rhabditoidea</taxon>
        <taxon>Rhabditidae</taxon>
        <taxon>Peloderinae</taxon>
        <taxon>Caenorhabditis</taxon>
    </lineage>
</organism>
<comment type="function">
    <text>Central component in molecular interactions underlying sperm crawling. Forms an extensive filament system that extends from sperm villipoda, along the leading edge of the pseudopod.</text>
</comment>
<comment type="subunit">
    <text evidence="3">Helical subfilaments are built from MSP dimers; filaments are formed from two subfilaments coiling round one another; and filaments themselves supercoil to produce bundles.</text>
</comment>
<comment type="subcellular location">
    <subcellularLocation>
        <location>Cell projection</location>
        <location>Pseudopodium</location>
    </subcellularLocation>
    <subcellularLocation>
        <location>Cytoplasm</location>
        <location>Cytoskeleton</location>
    </subcellularLocation>
</comment>
<comment type="tissue specificity">
    <text>Sperm.</text>
</comment>
<comment type="miscellaneous">
    <text>Around 30 MSP isoforms may exist in C.elegans.</text>
</comment>
<reference key="1">
    <citation type="journal article" date="1998" name="Science">
        <title>Genome sequence of the nematode C. elegans: a platform for investigating biology.</title>
        <authorList>
            <consortium name="The C. elegans sequencing consortium"/>
        </authorList>
    </citation>
    <scope>NUCLEOTIDE SEQUENCE [LARGE SCALE GENOMIC DNA]</scope>
    <source>
        <strain>Bristol N2</strain>
    </source>
</reference>
<reference key="2">
    <citation type="journal article" date="2002" name="J. Mol. Biol.">
        <title>2.6 A resolution crystal structure of helices of the motile major sperm protein (MSP) of Caenorhabditis elegans.</title>
        <authorList>
            <person name="Baker A.M."/>
            <person name="Roberts T.M."/>
            <person name="Stewart M."/>
        </authorList>
    </citation>
    <scope>X-RAY CRYSTALLOGRAPHY (2.6 ANGSTROMS)</scope>
    <scope>SUBUNIT</scope>
</reference>
<proteinExistence type="evidence at protein level"/>
<dbReference type="EMBL" id="FO080275">
    <property type="protein sequence ID" value="CCD62525.1"/>
    <property type="molecule type" value="Genomic_DNA"/>
</dbReference>
<dbReference type="EMBL" id="FO080689">
    <property type="protein sequence ID" value="CCD65824.1"/>
    <property type="molecule type" value="Genomic_DNA"/>
</dbReference>
<dbReference type="EMBL" id="FO080690">
    <property type="protein sequence ID" value="CCD65838.1"/>
    <property type="molecule type" value="Genomic_DNA"/>
</dbReference>
<dbReference type="EMBL" id="FO080763">
    <property type="protein sequence ID" value="CCD66514.1"/>
    <property type="molecule type" value="Genomic_DNA"/>
</dbReference>
<dbReference type="EMBL" id="FO081106">
    <property type="protein sequence ID" value="CCD69142.1"/>
    <property type="molecule type" value="Genomic_DNA"/>
</dbReference>
<dbReference type="EMBL" id="FO081120">
    <property type="protein sequence ID" value="CCD69279.1"/>
    <property type="molecule type" value="Genomic_DNA"/>
</dbReference>
<dbReference type="EMBL" id="FO081309">
    <property type="protein sequence ID" value="CCD70664.1"/>
    <property type="molecule type" value="Genomic_DNA"/>
</dbReference>
<dbReference type="EMBL" id="FO081310">
    <property type="protein sequence ID" value="CCD70677.1"/>
    <property type="molecule type" value="Genomic_DNA"/>
</dbReference>
<dbReference type="EMBL" id="FO081310">
    <property type="protein sequence ID" value="CCD70681.1"/>
    <property type="molecule type" value="Genomic_DNA"/>
</dbReference>
<dbReference type="EMBL" id="FO081310">
    <property type="protein sequence ID" value="CCD70682.1"/>
    <property type="molecule type" value="Genomic_DNA"/>
</dbReference>
<dbReference type="EMBL" id="FO081310">
    <property type="protein sequence ID" value="CCD70687.1"/>
    <property type="molecule type" value="Genomic_DNA"/>
</dbReference>
<dbReference type="EMBL" id="FO081574">
    <property type="protein sequence ID" value="CCD72508.1"/>
    <property type="molecule type" value="Genomic_DNA"/>
</dbReference>
<dbReference type="PIR" id="A88165">
    <property type="entry name" value="A88165"/>
</dbReference>
<dbReference type="PIR" id="B88689">
    <property type="entry name" value="B88689"/>
</dbReference>
<dbReference type="PIR" id="C88688">
    <property type="entry name" value="C88688"/>
</dbReference>
<dbReference type="PIR" id="C88689">
    <property type="entry name" value="C88689"/>
</dbReference>
<dbReference type="PIR" id="D88164">
    <property type="entry name" value="D88164"/>
</dbReference>
<dbReference type="PIR" id="E88134">
    <property type="entry name" value="E88134"/>
</dbReference>
<dbReference type="PIR" id="F88138">
    <property type="entry name" value="F88138"/>
</dbReference>
<dbReference type="PIR" id="G88145">
    <property type="entry name" value="G88145"/>
</dbReference>
<dbReference type="PIR" id="G88686">
    <property type="entry name" value="G88686"/>
</dbReference>
<dbReference type="PIR" id="H88146">
    <property type="entry name" value="H88146"/>
</dbReference>
<dbReference type="PIR" id="H88688">
    <property type="entry name" value="H88688"/>
</dbReference>
<dbReference type="PIR" id="H88792">
    <property type="entry name" value="H88792"/>
</dbReference>
<dbReference type="RefSeq" id="NP_001367824.1">
    <property type="nucleotide sequence ID" value="NM_001380219.1"/>
</dbReference>
<dbReference type="RefSeq" id="NP_494865.1">
    <property type="nucleotide sequence ID" value="NM_062464.6"/>
</dbReference>
<dbReference type="RefSeq" id="NP_494898.1">
    <property type="nucleotide sequence ID" value="NM_062497.6"/>
</dbReference>
<dbReference type="RefSeq" id="NP_494959.1">
    <property type="nucleotide sequence ID" value="NM_062558.8"/>
</dbReference>
<dbReference type="RefSeq" id="NP_494972.1">
    <property type="nucleotide sequence ID" value="NM_062571.8"/>
</dbReference>
<dbReference type="RefSeq" id="NP_495144.1">
    <property type="nucleotide sequence ID" value="NM_062743.4"/>
</dbReference>
<dbReference type="RefSeq" id="NP_495149.1">
    <property type="nucleotide sequence ID" value="NM_062748.3"/>
</dbReference>
<dbReference type="RefSeq" id="NP_500714.1">
    <property type="nucleotide sequence ID" value="NM_068313.5"/>
</dbReference>
<dbReference type="RefSeq" id="NP_500760.1">
    <property type="nucleotide sequence ID" value="NM_068359.5"/>
</dbReference>
<dbReference type="RefSeq" id="NP_500771.1">
    <property type="nucleotide sequence ID" value="NM_068370.7"/>
</dbReference>
<dbReference type="RefSeq" id="NP_500773.1">
    <property type="nucleotide sequence ID" value="NM_068372.6"/>
</dbReference>
<dbReference type="RefSeq" id="NP_500778.1">
    <property type="nucleotide sequence ID" value="NM_068377.7"/>
</dbReference>
<dbReference type="RefSeq" id="NP_500780.1">
    <property type="nucleotide sequence ID" value="NM_068379.4"/>
</dbReference>
<dbReference type="RefSeq" id="NP_501759.1">
    <property type="nucleotide sequence ID" value="NM_069358.4"/>
</dbReference>
<dbReference type="PDB" id="1GRW">
    <property type="method" value="X-ray"/>
    <property type="resolution" value="2.60 A"/>
    <property type="chains" value="A/B/C/D=2-127"/>
</dbReference>
<dbReference type="PDBsum" id="1GRW"/>
<dbReference type="SMR" id="P53017"/>
<dbReference type="BioGRID" id="39184">
    <property type="interactions" value="1"/>
</dbReference>
<dbReference type="BioGRID" id="39234">
    <property type="interactions" value="1"/>
</dbReference>
<dbReference type="BioGRID" id="39322">
    <property type="interactions" value="2"/>
</dbReference>
<dbReference type="BioGRID" id="39324">
    <property type="interactions" value="1"/>
</dbReference>
<dbReference type="BioGRID" id="42401">
    <property type="interactions" value="1"/>
</dbReference>
<dbReference type="BioGRID" id="42931">
    <property type="interactions" value="1"/>
</dbReference>
<dbReference type="BioGRID" id="56828">
    <property type="interactions" value="1"/>
</dbReference>
<dbReference type="DIP" id="DIP-25397N"/>
<dbReference type="FunCoup" id="P53017">
    <property type="interactions" value="20"/>
</dbReference>
<dbReference type="IntAct" id="P53017">
    <property type="interactions" value="1"/>
</dbReference>
<dbReference type="STRING" id="6239.C33F10.9.1"/>
<dbReference type="PaxDb" id="6239-C33F10.9"/>
<dbReference type="PeptideAtlas" id="P53017"/>
<dbReference type="EnsemblMetazoa" id="C33F10.9.1">
    <property type="protein sequence ID" value="C33F10.9.1"/>
    <property type="gene ID" value="WBGene00003435"/>
</dbReference>
<dbReference type="EnsemblMetazoa" id="C34F11.4.1">
    <property type="protein sequence ID" value="C34F11.4.1"/>
    <property type="gene ID" value="WBGene00003443"/>
</dbReference>
<dbReference type="EnsemblMetazoa" id="F36H12.7.1">
    <property type="protein sequence ID" value="F36H12.7.1"/>
    <property type="gene ID" value="WBGene00003426"/>
</dbReference>
<dbReference type="EnsemblMetazoa" id="F58A6.8.1">
    <property type="protein sequence ID" value="F58A6.8.1"/>
    <property type="gene ID" value="WBGene00003438"/>
</dbReference>
<dbReference type="EnsemblMetazoa" id="K05F1.2.1">
    <property type="protein sequence ID" value="K05F1.2.1"/>
    <property type="gene ID" value="WBGene00003469"/>
</dbReference>
<dbReference type="EnsemblMetazoa" id="R05F9.13.1">
    <property type="protein sequence ID" value="R05F9.13.1"/>
    <property type="gene ID" value="WBGene00003429"/>
</dbReference>
<dbReference type="EnsemblMetazoa" id="R13H9.4.1">
    <property type="protein sequence ID" value="R13H9.4.1"/>
    <property type="gene ID" value="WBGene00003446"/>
</dbReference>
<dbReference type="EnsemblMetazoa" id="ZK1248.6.1">
    <property type="protein sequence ID" value="ZK1248.6.1"/>
    <property type="gene ID" value="WBGene00003457"/>
</dbReference>
<dbReference type="EnsemblMetazoa" id="ZK354.1.1">
    <property type="protein sequence ID" value="ZK354.1.1"/>
    <property type="gene ID" value="WBGene00003458"/>
</dbReference>
<dbReference type="EnsemblMetazoa" id="ZK354.11.1">
    <property type="protein sequence ID" value="ZK354.11.1"/>
    <property type="gene ID" value="WBGene00003452"/>
</dbReference>
<dbReference type="EnsemblMetazoa" id="ZK354.4.1">
    <property type="protein sequence ID" value="ZK354.4.1"/>
    <property type="gene ID" value="WBGene00003468"/>
</dbReference>
<dbReference type="EnsemblMetazoa" id="ZK354.5.1">
    <property type="protein sequence ID" value="ZK354.5.1"/>
    <property type="gene ID" value="WBGene00003444"/>
</dbReference>
<dbReference type="GeneID" id="173830"/>
<dbReference type="GeneID" id="173849"/>
<dbReference type="GeneID" id="173884"/>
<dbReference type="GeneID" id="173890"/>
<dbReference type="GeneID" id="173981"/>
<dbReference type="GeneID" id="173983"/>
<dbReference type="GeneID" id="177275"/>
<dbReference type="GeneID" id="177305"/>
<dbReference type="GeneID" id="177309"/>
<dbReference type="GeneID" id="177311"/>
<dbReference type="GeneID" id="191292"/>
<dbReference type="GeneID" id="259801"/>
<dbReference type="KEGG" id="cel:CELE_C33F10.9"/>
<dbReference type="KEGG" id="cel:CELE_C34F11.4"/>
<dbReference type="KEGG" id="cel:CELE_F58A6.8"/>
<dbReference type="KEGG" id="cel:CELE_K05F1.2"/>
<dbReference type="KEGG" id="cel:CELE_R05F9.13"/>
<dbReference type="KEGG" id="cel:CELE_R13H9.4"/>
<dbReference type="KEGG" id="cel:CELE_ZK1248.6"/>
<dbReference type="KEGG" id="cel:CELE_ZK354.1"/>
<dbReference type="KEGG" id="cel:CELE_ZK354.11"/>
<dbReference type="KEGG" id="cel:CELE_ZK354.4"/>
<dbReference type="KEGG" id="cel:CELE_ZK354.5"/>
<dbReference type="UCSC" id="C33F10.9">
    <property type="organism name" value="c. elegans"/>
</dbReference>
<dbReference type="AGR" id="WB:WBGene00003426"/>
<dbReference type="AGR" id="WB:WBGene00003429"/>
<dbReference type="AGR" id="WB:WBGene00003435"/>
<dbReference type="AGR" id="WB:WBGene00003438"/>
<dbReference type="AGR" id="WB:WBGene00003443"/>
<dbReference type="AGR" id="WB:WBGene00003444"/>
<dbReference type="AGR" id="WB:WBGene00003446"/>
<dbReference type="AGR" id="WB:WBGene00003452"/>
<dbReference type="AGR" id="WB:WBGene00003457"/>
<dbReference type="AGR" id="WB:WBGene00003458"/>
<dbReference type="AGR" id="WB:WBGene00003468"/>
<dbReference type="AGR" id="WB:WBGene00003469"/>
<dbReference type="CTD" id="173830"/>
<dbReference type="CTD" id="173849"/>
<dbReference type="CTD" id="173884"/>
<dbReference type="CTD" id="173890"/>
<dbReference type="CTD" id="173981"/>
<dbReference type="CTD" id="173983"/>
<dbReference type="CTD" id="177275"/>
<dbReference type="CTD" id="177309"/>
<dbReference type="CTD" id="177311"/>
<dbReference type="CTD" id="191292"/>
<dbReference type="CTD" id="259801"/>
<dbReference type="WormBase" id="C33F10.9">
    <property type="protein sequence ID" value="CE02806"/>
    <property type="gene ID" value="WBGene00003435"/>
    <property type="gene designation" value="msp-40"/>
</dbReference>
<dbReference type="WormBase" id="C34F11.4">
    <property type="protein sequence ID" value="CE02806"/>
    <property type="gene ID" value="WBGene00003443"/>
    <property type="gene designation" value="msp-50"/>
</dbReference>
<dbReference type="WormBase" id="F36H12.7">
    <property type="protein sequence ID" value="CE02806"/>
    <property type="gene ID" value="WBGene00003426"/>
    <property type="gene designation" value="msp-19"/>
</dbReference>
<dbReference type="WormBase" id="F58A6.8">
    <property type="protein sequence ID" value="CE02806"/>
    <property type="gene ID" value="WBGene00003438"/>
    <property type="gene designation" value="msp-45"/>
</dbReference>
<dbReference type="WormBase" id="K05F1.2">
    <property type="protein sequence ID" value="CE02806"/>
    <property type="gene ID" value="WBGene00003469"/>
    <property type="gene designation" value="msp-142"/>
</dbReference>
<dbReference type="WormBase" id="K07F5.1">
    <property type="protein sequence ID" value="CE02806"/>
    <property type="gene ID" value="WBGene00003467"/>
    <property type="gene designation" value="msp-81"/>
</dbReference>
<dbReference type="WormBase" id="R05F9.13">
    <property type="protein sequence ID" value="CE02806"/>
    <property type="gene ID" value="WBGene00003429"/>
    <property type="gene designation" value="msp-31"/>
</dbReference>
<dbReference type="WormBase" id="R13H9.4">
    <property type="protein sequence ID" value="CE02806"/>
    <property type="gene ID" value="WBGene00003446"/>
    <property type="gene designation" value="msp-53"/>
</dbReference>
<dbReference type="WormBase" id="ZK1248.6">
    <property type="protein sequence ID" value="CE02806"/>
    <property type="gene ID" value="WBGene00003457"/>
    <property type="gene designation" value="msp-64"/>
</dbReference>
<dbReference type="WormBase" id="ZK354.1">
    <property type="protein sequence ID" value="CE02806"/>
    <property type="gene ID" value="WBGene00003458"/>
    <property type="gene designation" value="msp-65"/>
</dbReference>
<dbReference type="WormBase" id="ZK354.11">
    <property type="protein sequence ID" value="CE02806"/>
    <property type="gene ID" value="WBGene00003452"/>
    <property type="gene designation" value="msp-59"/>
</dbReference>
<dbReference type="WormBase" id="ZK354.4">
    <property type="protein sequence ID" value="CE02806"/>
    <property type="gene ID" value="WBGene00003468"/>
    <property type="gene designation" value="msp-113"/>
</dbReference>
<dbReference type="WormBase" id="ZK354.5">
    <property type="protein sequence ID" value="CE02806"/>
    <property type="gene ID" value="WBGene00003444"/>
    <property type="gene designation" value="msp-51"/>
</dbReference>
<dbReference type="eggNOG" id="ENOG502RXF6">
    <property type="taxonomic scope" value="Eukaryota"/>
</dbReference>
<dbReference type="GeneTree" id="ENSGT00970000195833"/>
<dbReference type="HOGENOM" id="CLU_120664_0_1_1"/>
<dbReference type="InParanoid" id="P53017"/>
<dbReference type="OrthoDB" id="5918453at2759"/>
<dbReference type="PhylomeDB" id="P53017"/>
<dbReference type="EvolutionaryTrace" id="P53017"/>
<dbReference type="PRO" id="PR:P53017"/>
<dbReference type="Proteomes" id="UP000001940">
    <property type="component" value="Chromosome II"/>
</dbReference>
<dbReference type="Proteomes" id="UP000001940">
    <property type="component" value="Chromosome IV"/>
</dbReference>
<dbReference type="Bgee" id="WBGene00003426">
    <property type="expression patterns" value="Expressed in adult organism and 2 other cell types or tissues"/>
</dbReference>
<dbReference type="GO" id="GO:0005737">
    <property type="term" value="C:cytoplasm"/>
    <property type="evidence" value="ECO:0007669"/>
    <property type="project" value="UniProtKB-KW"/>
</dbReference>
<dbReference type="GO" id="GO:0005856">
    <property type="term" value="C:cytoskeleton"/>
    <property type="evidence" value="ECO:0007669"/>
    <property type="project" value="UniProtKB-SubCell"/>
</dbReference>
<dbReference type="GO" id="GO:0031143">
    <property type="term" value="C:pseudopodium"/>
    <property type="evidence" value="ECO:0007669"/>
    <property type="project" value="UniProtKB-SubCell"/>
</dbReference>
<dbReference type="FunFam" id="2.60.40.10:FF:001120">
    <property type="entry name" value="Major sperm protein 19/31/40/45/50/51/53/59/61/65/81/113/142"/>
    <property type="match status" value="1"/>
</dbReference>
<dbReference type="Gene3D" id="2.60.40.10">
    <property type="entry name" value="Immunoglobulins"/>
    <property type="match status" value="1"/>
</dbReference>
<dbReference type="InterPro" id="IPR013783">
    <property type="entry name" value="Ig-like_fold"/>
</dbReference>
<dbReference type="InterPro" id="IPR000535">
    <property type="entry name" value="MSP_dom"/>
</dbReference>
<dbReference type="InterPro" id="IPR051155">
    <property type="entry name" value="Nematode_MSP"/>
</dbReference>
<dbReference type="InterPro" id="IPR008962">
    <property type="entry name" value="PapD-like_sf"/>
</dbReference>
<dbReference type="PANTHER" id="PTHR22920">
    <property type="entry name" value="MAJOR SPERM PROTEIN"/>
    <property type="match status" value="1"/>
</dbReference>
<dbReference type="PANTHER" id="PTHR22920:SF7">
    <property type="entry name" value="MSP DOMAIN-CONTAINING PROTEIN-RELATED"/>
    <property type="match status" value="1"/>
</dbReference>
<dbReference type="Pfam" id="PF00635">
    <property type="entry name" value="Motile_Sperm"/>
    <property type="match status" value="1"/>
</dbReference>
<dbReference type="SUPFAM" id="SSF49354">
    <property type="entry name" value="PapD-like"/>
    <property type="match status" value="1"/>
</dbReference>
<dbReference type="PROSITE" id="PS50202">
    <property type="entry name" value="MSP"/>
    <property type="match status" value="1"/>
</dbReference>
<sequence length="127" mass="14209">MAQSVPPGDIQTQPGTKIVFNAPYDDKHTYHIKVINSSARRIGYGIKTTNMKRLGVDPPCGVLDPKEAVLLAVSCDAFAFGQEDTNNDRITVEWTNTPDGAAKQFRREWFQGDGMVRRKNLPIEYNP</sequence>
<evidence type="ECO:0000250" key="1"/>
<evidence type="ECO:0000255" key="2">
    <source>
        <dbReference type="PROSITE-ProRule" id="PRU00132"/>
    </source>
</evidence>
<evidence type="ECO:0000269" key="3">
    <source>
    </source>
</evidence>
<evidence type="ECO:0007829" key="4">
    <source>
        <dbReference type="PDB" id="1GRW"/>
    </source>
</evidence>
<gene>
    <name type="primary">msp-19</name>
    <name type="ORF">F36H12.7</name>
</gene>
<gene>
    <name type="primary">msp-31</name>
    <name type="ORF">R05F9.13</name>
</gene>
<gene>
    <name type="primary">msp-40</name>
    <name type="ORF">C33F10.9</name>
</gene>
<gene>
    <name type="primary">msp-45</name>
    <name type="ORF">F58A6.8</name>
</gene>
<gene>
    <name type="primary">msp-50</name>
    <name type="ORF">C34F11.4</name>
</gene>
<gene>
    <name type="primary">msp-51</name>
    <name type="ORF">ZK354.5</name>
</gene>
<gene>
    <name type="primary">msp-53</name>
    <name type="ORF">R13H9.4</name>
</gene>
<gene>
    <name type="primary">msp-59</name>
    <name type="ORF">ZK354.11</name>
</gene>
<gene>
    <name type="primary">msp-64</name>
    <name type="ORF">ZK1248.6</name>
</gene>
<gene>
    <name type="primary">msp-65</name>
    <name type="ORF">ZK354.1</name>
</gene>
<gene>
    <name type="primary">msp-81</name>
    <name type="ORF">K07F5.1</name>
</gene>
<gene>
    <name type="primary">msp-113</name>
    <name type="ORF">ZK354.4</name>
</gene>
<gene>
    <name type="primary">msp-142</name>
    <name type="ORF">K05F1.2</name>
</gene>